<sequence length="691" mass="75777">MARDFPLERVRNIGIAAHIDAGKTTTTERILFYSGVVHKIGEVHDGAAVTDWMDQERERGITITAAAISTSWQDHRINIIDTPGHVDFTIEVERSMRVLDGVIAVFCAVGGVQPQSETVWRQADRYSVPRMVFVNKMDRTGADFLKVNKQIKERLKANAFPIQLPIGAEGDLTGIIDLVSNKAYLYKNDLGTDIEEAPIPDEMKDEALEWRSKLMESVAENDEELIEIFLDKGELTEDQLKKGIREGVLKHGLVPVLCGSAFKNKGVQLVLDAVVDYLPAPVDVKPIQGVLPNGKEDIRPSDDNAPFSALAFKVMSDPYGKLTFVRMYSGVLSKGSYVMNSTKDAKERISRLVILKADEREEVDELRAGDLGAVLGLKNTTTGDTLCTTDDPIVLETLFIPEPVISVAVEPKTKGDMEKLSKALQALSEEDPTFRVSTDQETNQTVIAGMGELHLEILVDRMLREFKVEANIGAPQVSYRETIRSSSRGEGKYARQTGGKGQYGHVVIEMEPAEVGKGFEFVNKIVGGTVPKEYIGPASNGMKETCESGVLAGYPLIDVKVTLVDGSFHDVDSSEMAFKIAGSMAFKDGVKKCNPVLLEPMMKVEVESPDDFLGSVIGDLSSRRGQVEGQSVDDGLSKVQAKVPLAEMFGYATQLRSMTQGRGIFSMEFANYEEVPRNVAEAIISKNQGNS</sequence>
<accession>A2BYN5</accession>
<keyword id="KW-0963">Cytoplasm</keyword>
<keyword id="KW-0251">Elongation factor</keyword>
<keyword id="KW-0342">GTP-binding</keyword>
<keyword id="KW-0547">Nucleotide-binding</keyword>
<keyword id="KW-0648">Protein biosynthesis</keyword>
<dbReference type="EMBL" id="CP000552">
    <property type="protein sequence ID" value="ABM72896.1"/>
    <property type="molecule type" value="Genomic_DNA"/>
</dbReference>
<dbReference type="RefSeq" id="WP_011820989.1">
    <property type="nucleotide sequence ID" value="NC_008817.1"/>
</dbReference>
<dbReference type="SMR" id="A2BYN5"/>
<dbReference type="STRING" id="167542.P9515_16891"/>
<dbReference type="GeneID" id="60201907"/>
<dbReference type="KEGG" id="pmc:P9515_16891"/>
<dbReference type="eggNOG" id="COG0480">
    <property type="taxonomic scope" value="Bacteria"/>
</dbReference>
<dbReference type="HOGENOM" id="CLU_002794_4_1_3"/>
<dbReference type="OrthoDB" id="580826at2"/>
<dbReference type="Proteomes" id="UP000001589">
    <property type="component" value="Chromosome"/>
</dbReference>
<dbReference type="GO" id="GO:0005737">
    <property type="term" value="C:cytoplasm"/>
    <property type="evidence" value="ECO:0007669"/>
    <property type="project" value="UniProtKB-SubCell"/>
</dbReference>
<dbReference type="GO" id="GO:0005525">
    <property type="term" value="F:GTP binding"/>
    <property type="evidence" value="ECO:0007669"/>
    <property type="project" value="UniProtKB-UniRule"/>
</dbReference>
<dbReference type="GO" id="GO:0003924">
    <property type="term" value="F:GTPase activity"/>
    <property type="evidence" value="ECO:0007669"/>
    <property type="project" value="InterPro"/>
</dbReference>
<dbReference type="GO" id="GO:0003746">
    <property type="term" value="F:translation elongation factor activity"/>
    <property type="evidence" value="ECO:0007669"/>
    <property type="project" value="UniProtKB-UniRule"/>
</dbReference>
<dbReference type="GO" id="GO:0032790">
    <property type="term" value="P:ribosome disassembly"/>
    <property type="evidence" value="ECO:0007669"/>
    <property type="project" value="TreeGrafter"/>
</dbReference>
<dbReference type="CDD" id="cd01886">
    <property type="entry name" value="EF-G"/>
    <property type="match status" value="1"/>
</dbReference>
<dbReference type="CDD" id="cd16262">
    <property type="entry name" value="EFG_III"/>
    <property type="match status" value="1"/>
</dbReference>
<dbReference type="CDD" id="cd01434">
    <property type="entry name" value="EFG_mtEFG1_IV"/>
    <property type="match status" value="1"/>
</dbReference>
<dbReference type="CDD" id="cd03713">
    <property type="entry name" value="EFG_mtEFG_C"/>
    <property type="match status" value="1"/>
</dbReference>
<dbReference type="CDD" id="cd04088">
    <property type="entry name" value="EFG_mtEFG_II"/>
    <property type="match status" value="1"/>
</dbReference>
<dbReference type="FunFam" id="2.40.30.10:FF:000006">
    <property type="entry name" value="Elongation factor G"/>
    <property type="match status" value="1"/>
</dbReference>
<dbReference type="FunFam" id="3.30.230.10:FF:000003">
    <property type="entry name" value="Elongation factor G"/>
    <property type="match status" value="1"/>
</dbReference>
<dbReference type="FunFam" id="3.30.70.240:FF:000001">
    <property type="entry name" value="Elongation factor G"/>
    <property type="match status" value="1"/>
</dbReference>
<dbReference type="FunFam" id="3.30.70.870:FF:000001">
    <property type="entry name" value="Elongation factor G"/>
    <property type="match status" value="1"/>
</dbReference>
<dbReference type="FunFam" id="3.40.50.300:FF:000029">
    <property type="entry name" value="Elongation factor G"/>
    <property type="match status" value="1"/>
</dbReference>
<dbReference type="Gene3D" id="3.30.230.10">
    <property type="match status" value="1"/>
</dbReference>
<dbReference type="Gene3D" id="3.30.70.240">
    <property type="match status" value="1"/>
</dbReference>
<dbReference type="Gene3D" id="3.30.70.870">
    <property type="entry name" value="Elongation Factor G (Translational Gtpase), domain 3"/>
    <property type="match status" value="1"/>
</dbReference>
<dbReference type="Gene3D" id="3.40.50.300">
    <property type="entry name" value="P-loop containing nucleotide triphosphate hydrolases"/>
    <property type="match status" value="1"/>
</dbReference>
<dbReference type="Gene3D" id="2.40.30.10">
    <property type="entry name" value="Translation factors"/>
    <property type="match status" value="1"/>
</dbReference>
<dbReference type="HAMAP" id="MF_00054_B">
    <property type="entry name" value="EF_G_EF_2_B"/>
    <property type="match status" value="1"/>
</dbReference>
<dbReference type="InterPro" id="IPR041095">
    <property type="entry name" value="EFG_II"/>
</dbReference>
<dbReference type="InterPro" id="IPR009022">
    <property type="entry name" value="EFG_III"/>
</dbReference>
<dbReference type="InterPro" id="IPR035647">
    <property type="entry name" value="EFG_III/V"/>
</dbReference>
<dbReference type="InterPro" id="IPR047872">
    <property type="entry name" value="EFG_IV"/>
</dbReference>
<dbReference type="InterPro" id="IPR035649">
    <property type="entry name" value="EFG_V"/>
</dbReference>
<dbReference type="InterPro" id="IPR000640">
    <property type="entry name" value="EFG_V-like"/>
</dbReference>
<dbReference type="InterPro" id="IPR004161">
    <property type="entry name" value="EFTu-like_2"/>
</dbReference>
<dbReference type="InterPro" id="IPR031157">
    <property type="entry name" value="G_TR_CS"/>
</dbReference>
<dbReference type="InterPro" id="IPR027417">
    <property type="entry name" value="P-loop_NTPase"/>
</dbReference>
<dbReference type="InterPro" id="IPR020568">
    <property type="entry name" value="Ribosomal_Su5_D2-typ_SF"/>
</dbReference>
<dbReference type="InterPro" id="IPR014721">
    <property type="entry name" value="Ribsml_uS5_D2-typ_fold_subgr"/>
</dbReference>
<dbReference type="InterPro" id="IPR005225">
    <property type="entry name" value="Small_GTP-bd"/>
</dbReference>
<dbReference type="InterPro" id="IPR000795">
    <property type="entry name" value="T_Tr_GTP-bd_dom"/>
</dbReference>
<dbReference type="InterPro" id="IPR009000">
    <property type="entry name" value="Transl_B-barrel_sf"/>
</dbReference>
<dbReference type="InterPro" id="IPR004540">
    <property type="entry name" value="Transl_elong_EFG/EF2"/>
</dbReference>
<dbReference type="InterPro" id="IPR005517">
    <property type="entry name" value="Transl_elong_EFG/EF2_IV"/>
</dbReference>
<dbReference type="NCBIfam" id="TIGR00484">
    <property type="entry name" value="EF-G"/>
    <property type="match status" value="1"/>
</dbReference>
<dbReference type="NCBIfam" id="NF009379">
    <property type="entry name" value="PRK12740.1-3"/>
    <property type="match status" value="1"/>
</dbReference>
<dbReference type="NCBIfam" id="NF009381">
    <property type="entry name" value="PRK12740.1-5"/>
    <property type="match status" value="1"/>
</dbReference>
<dbReference type="NCBIfam" id="TIGR00231">
    <property type="entry name" value="small_GTP"/>
    <property type="match status" value="1"/>
</dbReference>
<dbReference type="PANTHER" id="PTHR43261:SF1">
    <property type="entry name" value="RIBOSOME-RELEASING FACTOR 2, MITOCHONDRIAL"/>
    <property type="match status" value="1"/>
</dbReference>
<dbReference type="PANTHER" id="PTHR43261">
    <property type="entry name" value="TRANSLATION ELONGATION FACTOR G-RELATED"/>
    <property type="match status" value="1"/>
</dbReference>
<dbReference type="Pfam" id="PF00679">
    <property type="entry name" value="EFG_C"/>
    <property type="match status" value="1"/>
</dbReference>
<dbReference type="Pfam" id="PF14492">
    <property type="entry name" value="EFG_III"/>
    <property type="match status" value="1"/>
</dbReference>
<dbReference type="Pfam" id="PF03764">
    <property type="entry name" value="EFG_IV"/>
    <property type="match status" value="1"/>
</dbReference>
<dbReference type="Pfam" id="PF00009">
    <property type="entry name" value="GTP_EFTU"/>
    <property type="match status" value="1"/>
</dbReference>
<dbReference type="Pfam" id="PF03144">
    <property type="entry name" value="GTP_EFTU_D2"/>
    <property type="match status" value="1"/>
</dbReference>
<dbReference type="PRINTS" id="PR00315">
    <property type="entry name" value="ELONGATNFCT"/>
</dbReference>
<dbReference type="SMART" id="SM00838">
    <property type="entry name" value="EFG_C"/>
    <property type="match status" value="1"/>
</dbReference>
<dbReference type="SMART" id="SM00889">
    <property type="entry name" value="EFG_IV"/>
    <property type="match status" value="1"/>
</dbReference>
<dbReference type="SUPFAM" id="SSF54980">
    <property type="entry name" value="EF-G C-terminal domain-like"/>
    <property type="match status" value="2"/>
</dbReference>
<dbReference type="SUPFAM" id="SSF52540">
    <property type="entry name" value="P-loop containing nucleoside triphosphate hydrolases"/>
    <property type="match status" value="1"/>
</dbReference>
<dbReference type="SUPFAM" id="SSF54211">
    <property type="entry name" value="Ribosomal protein S5 domain 2-like"/>
    <property type="match status" value="1"/>
</dbReference>
<dbReference type="SUPFAM" id="SSF50447">
    <property type="entry name" value="Translation proteins"/>
    <property type="match status" value="1"/>
</dbReference>
<dbReference type="PROSITE" id="PS00301">
    <property type="entry name" value="G_TR_1"/>
    <property type="match status" value="1"/>
</dbReference>
<dbReference type="PROSITE" id="PS51722">
    <property type="entry name" value="G_TR_2"/>
    <property type="match status" value="1"/>
</dbReference>
<comment type="function">
    <text evidence="1">Catalyzes the GTP-dependent ribosomal translocation step during translation elongation. During this step, the ribosome changes from the pre-translocational (PRE) to the post-translocational (POST) state as the newly formed A-site-bound peptidyl-tRNA and P-site-bound deacylated tRNA move to the P and E sites, respectively. Catalyzes the coordinated movement of the two tRNA molecules, the mRNA and conformational changes in the ribosome.</text>
</comment>
<comment type="subcellular location">
    <subcellularLocation>
        <location evidence="1">Cytoplasm</location>
    </subcellularLocation>
</comment>
<comment type="similarity">
    <text evidence="1">Belongs to the TRAFAC class translation factor GTPase superfamily. Classic translation factor GTPase family. EF-G/EF-2 subfamily.</text>
</comment>
<gene>
    <name evidence="1" type="primary">fusA</name>
    <name type="ordered locus">P9515_16891</name>
</gene>
<feature type="chain" id="PRO_1000008868" description="Elongation factor G">
    <location>
        <begin position="1"/>
        <end position="691"/>
    </location>
</feature>
<feature type="domain" description="tr-type G">
    <location>
        <begin position="8"/>
        <end position="282"/>
    </location>
</feature>
<feature type="binding site" evidence="1">
    <location>
        <begin position="17"/>
        <end position="24"/>
    </location>
    <ligand>
        <name>GTP</name>
        <dbReference type="ChEBI" id="CHEBI:37565"/>
    </ligand>
</feature>
<feature type="binding site" evidence="1">
    <location>
        <begin position="81"/>
        <end position="85"/>
    </location>
    <ligand>
        <name>GTP</name>
        <dbReference type="ChEBI" id="CHEBI:37565"/>
    </ligand>
</feature>
<feature type="binding site" evidence="1">
    <location>
        <begin position="135"/>
        <end position="138"/>
    </location>
    <ligand>
        <name>GTP</name>
        <dbReference type="ChEBI" id="CHEBI:37565"/>
    </ligand>
</feature>
<proteinExistence type="inferred from homology"/>
<name>EFG_PROM5</name>
<protein>
    <recommendedName>
        <fullName evidence="1">Elongation factor G</fullName>
        <shortName evidence="1">EF-G</shortName>
    </recommendedName>
</protein>
<reference key="1">
    <citation type="journal article" date="2007" name="PLoS Genet.">
        <title>Patterns and implications of gene gain and loss in the evolution of Prochlorococcus.</title>
        <authorList>
            <person name="Kettler G.C."/>
            <person name="Martiny A.C."/>
            <person name="Huang K."/>
            <person name="Zucker J."/>
            <person name="Coleman M.L."/>
            <person name="Rodrigue S."/>
            <person name="Chen F."/>
            <person name="Lapidus A."/>
            <person name="Ferriera S."/>
            <person name="Johnson J."/>
            <person name="Steglich C."/>
            <person name="Church G.M."/>
            <person name="Richardson P."/>
            <person name="Chisholm S.W."/>
        </authorList>
    </citation>
    <scope>NUCLEOTIDE SEQUENCE [LARGE SCALE GENOMIC DNA]</scope>
    <source>
        <strain>MIT 9515</strain>
    </source>
</reference>
<evidence type="ECO:0000255" key="1">
    <source>
        <dbReference type="HAMAP-Rule" id="MF_00054"/>
    </source>
</evidence>
<organism>
    <name type="scientific">Prochlorococcus marinus (strain MIT 9515)</name>
    <dbReference type="NCBI Taxonomy" id="167542"/>
    <lineage>
        <taxon>Bacteria</taxon>
        <taxon>Bacillati</taxon>
        <taxon>Cyanobacteriota</taxon>
        <taxon>Cyanophyceae</taxon>
        <taxon>Synechococcales</taxon>
        <taxon>Prochlorococcaceae</taxon>
        <taxon>Prochlorococcus</taxon>
    </lineage>
</organism>